<gene>
    <name evidence="8" type="primary">gloO</name>
    <name evidence="9" type="synonym">GLP450-2</name>
    <name type="ORF">GLAREA_10031</name>
</gene>
<name>GLOO_GLAL2</name>
<dbReference type="EC" id="1.-.-.-" evidence="12"/>
<dbReference type="EMBL" id="KE145356">
    <property type="protein sequence ID" value="EPE34337.1"/>
    <property type="molecule type" value="Genomic_DNA"/>
</dbReference>
<dbReference type="RefSeq" id="XP_008078272.1">
    <property type="nucleotide sequence ID" value="XM_008080081.1"/>
</dbReference>
<dbReference type="SMR" id="S3D775"/>
<dbReference type="GeneID" id="19469078"/>
<dbReference type="KEGG" id="glz:GLAREA_10031"/>
<dbReference type="eggNOG" id="KOG0156">
    <property type="taxonomic scope" value="Eukaryota"/>
</dbReference>
<dbReference type="HOGENOM" id="CLU_022195_9_2_1"/>
<dbReference type="OMA" id="RRECPKE"/>
<dbReference type="OrthoDB" id="1844152at2759"/>
<dbReference type="Proteomes" id="UP000016922">
    <property type="component" value="Unassembled WGS sequence"/>
</dbReference>
<dbReference type="GO" id="GO:0020037">
    <property type="term" value="F:heme binding"/>
    <property type="evidence" value="ECO:0007669"/>
    <property type="project" value="InterPro"/>
</dbReference>
<dbReference type="GO" id="GO:0005506">
    <property type="term" value="F:iron ion binding"/>
    <property type="evidence" value="ECO:0007669"/>
    <property type="project" value="InterPro"/>
</dbReference>
<dbReference type="GO" id="GO:0004497">
    <property type="term" value="F:monooxygenase activity"/>
    <property type="evidence" value="ECO:0007669"/>
    <property type="project" value="UniProtKB-KW"/>
</dbReference>
<dbReference type="GO" id="GO:0016705">
    <property type="term" value="F:oxidoreductase activity, acting on paired donors, with incorporation or reduction of molecular oxygen"/>
    <property type="evidence" value="ECO:0007669"/>
    <property type="project" value="InterPro"/>
</dbReference>
<dbReference type="GO" id="GO:0019748">
    <property type="term" value="P:secondary metabolic process"/>
    <property type="evidence" value="ECO:0007669"/>
    <property type="project" value="UniProtKB-ARBA"/>
</dbReference>
<dbReference type="CDD" id="cd11041">
    <property type="entry name" value="CYP503A1-like"/>
    <property type="match status" value="1"/>
</dbReference>
<dbReference type="Gene3D" id="1.10.630.10">
    <property type="entry name" value="Cytochrome P450"/>
    <property type="match status" value="1"/>
</dbReference>
<dbReference type="InterPro" id="IPR001128">
    <property type="entry name" value="Cyt_P450"/>
</dbReference>
<dbReference type="InterPro" id="IPR017972">
    <property type="entry name" value="Cyt_P450_CS"/>
</dbReference>
<dbReference type="InterPro" id="IPR002403">
    <property type="entry name" value="Cyt_P450_E_grp-IV"/>
</dbReference>
<dbReference type="InterPro" id="IPR036396">
    <property type="entry name" value="Cyt_P450_sf"/>
</dbReference>
<dbReference type="PANTHER" id="PTHR46206">
    <property type="entry name" value="CYTOCHROME P450"/>
    <property type="match status" value="1"/>
</dbReference>
<dbReference type="PANTHER" id="PTHR46206:SF1">
    <property type="entry name" value="P450, PUTATIVE (EUROFUNG)-RELATED"/>
    <property type="match status" value="1"/>
</dbReference>
<dbReference type="Pfam" id="PF00067">
    <property type="entry name" value="p450"/>
    <property type="match status" value="1"/>
</dbReference>
<dbReference type="PRINTS" id="PR00465">
    <property type="entry name" value="EP450IV"/>
</dbReference>
<dbReference type="SUPFAM" id="SSF48264">
    <property type="entry name" value="Cytochrome P450"/>
    <property type="match status" value="1"/>
</dbReference>
<dbReference type="PROSITE" id="PS00086">
    <property type="entry name" value="CYTOCHROME_P450"/>
    <property type="match status" value="1"/>
</dbReference>
<organism>
    <name type="scientific">Glarea lozoyensis (strain ATCC 20868 / MF5171)</name>
    <dbReference type="NCBI Taxonomy" id="1116229"/>
    <lineage>
        <taxon>Eukaryota</taxon>
        <taxon>Fungi</taxon>
        <taxon>Dikarya</taxon>
        <taxon>Ascomycota</taxon>
        <taxon>Pezizomycotina</taxon>
        <taxon>Leotiomycetes</taxon>
        <taxon>Helotiales</taxon>
        <taxon>Helotiaceae</taxon>
        <taxon>Glarea</taxon>
    </lineage>
</organism>
<protein>
    <recommendedName>
        <fullName evidence="8">Cytochrome P450 monooxygenase gloO</fullName>
        <ecNumber evidence="12">1.-.-.-</ecNumber>
    </recommendedName>
    <alternativeName>
        <fullName evidence="10">Ornithine 3,4-hydroxylase</fullName>
    </alternativeName>
    <alternativeName>
        <fullName evidence="8">Pneumocandin biosynthesis cluster protein O</fullName>
    </alternativeName>
</protein>
<feature type="signal peptide" evidence="2">
    <location>
        <begin position="1"/>
        <end position="26"/>
    </location>
</feature>
<feature type="chain" id="PRO_0000444489" description="Cytochrome P450 monooxygenase gloO" evidence="2">
    <location>
        <begin position="27"/>
        <end position="521"/>
    </location>
</feature>
<feature type="binding site" description="axial binding residue" evidence="1">
    <location>
        <position position="464"/>
    </location>
    <ligand>
        <name>heme</name>
        <dbReference type="ChEBI" id="CHEBI:30413"/>
    </ligand>
    <ligandPart>
        <name>Fe</name>
        <dbReference type="ChEBI" id="CHEBI:18248"/>
    </ligandPart>
</feature>
<evidence type="ECO:0000250" key="1">
    <source>
        <dbReference type="UniProtKB" id="P04798"/>
    </source>
</evidence>
<evidence type="ECO:0000255" key="2"/>
<evidence type="ECO:0000269" key="3">
    <source>
    </source>
</evidence>
<evidence type="ECO:0000269" key="4">
    <source>
    </source>
</evidence>
<evidence type="ECO:0000269" key="5">
    <source>
    </source>
</evidence>
<evidence type="ECO:0000269" key="6">
    <source>
    </source>
</evidence>
<evidence type="ECO:0000269" key="7">
    <source>
    </source>
</evidence>
<evidence type="ECO:0000303" key="8">
    <source>
    </source>
</evidence>
<evidence type="ECO:0000303" key="9">
    <source>
    </source>
</evidence>
<evidence type="ECO:0000303" key="10">
    <source>
    </source>
</evidence>
<evidence type="ECO:0000305" key="11"/>
<evidence type="ECO:0000305" key="12">
    <source>
    </source>
</evidence>
<reference key="1">
    <citation type="journal article" date="2013" name="BMC Genomics">
        <title>Genomics-driven discovery of the pneumocandin biosynthetic gene cluster in the fungus Glarea lozoyensis.</title>
        <authorList>
            <person name="Chen L."/>
            <person name="Yue Q."/>
            <person name="Zhang X."/>
            <person name="Xiang M."/>
            <person name="Wang C."/>
            <person name="Li S."/>
            <person name="Che Y."/>
            <person name="Ortiz-Lopez F.J."/>
            <person name="Bills G.F."/>
            <person name="Liu X."/>
            <person name="An Z."/>
        </authorList>
    </citation>
    <scope>NUCLEOTIDE SEQUENCE [LARGE SCALE GENOMIC DNA]</scope>
    <scope>IDENTIFICATION</scope>
    <scope>FUNCTION</scope>
    <source>
        <strain>ATCC 20868 / MF5171</strain>
    </source>
</reference>
<reference key="2">
    <citation type="journal article" date="2014" name="ChemBioChem">
        <title>Pneumocandin biosynthesis: involvement of a trans-selective proline hydroxylase.</title>
        <authorList>
            <person name="Houwaart S."/>
            <person name="Youssar L."/>
            <person name="Huettel W."/>
        </authorList>
    </citation>
    <scope>FUNCTION</scope>
</reference>
<reference key="3">
    <citation type="journal article" date="2015" name="ACS Chem. Biol.">
        <title>Genetic manipulation of the pneumocandin biosynthetic pathway for generation of analogues and evaluation of their antifungal activity.</title>
        <authorList>
            <person name="Li Y."/>
            <person name="Chen L."/>
            <person name="Yue Q."/>
            <person name="Liu X."/>
            <person name="An Z."/>
            <person name="Bills G.F."/>
        </authorList>
    </citation>
    <scope>FUNCTION</scope>
    <scope>DISRUPTION PHENOTYPE</scope>
    <scope>PATHWAY</scope>
    <scope>BIOTECHNOLOGY</scope>
</reference>
<reference key="4">
    <citation type="journal article" date="2015" name="Appl. Environ. Microbiol.">
        <title>Engineering of Glarea lozoyensis for exclusive production of the pneumocandin B0 precursor of the antifungal drug caspofungin acetate.</title>
        <authorList>
            <person name="Chen L."/>
            <person name="Yue Q."/>
            <person name="Li Y."/>
            <person name="Niu X."/>
            <person name="Xiang M."/>
            <person name="Wang W."/>
            <person name="Bills G.F."/>
            <person name="Liu X."/>
            <person name="An Z."/>
        </authorList>
    </citation>
    <scope>FUNCTION</scope>
    <scope>BIOTECHNOLOGY</scope>
</reference>
<reference key="5">
    <citation type="journal article" date="2016" name="ACS Chem. Biol.">
        <title>Engineering of new pneumocandin side-chain analogues from Glarea lozoyensis by mutasynthesis and evaluation of their antifungal activity.</title>
        <authorList>
            <person name="Chen L."/>
            <person name="Li Y."/>
            <person name="Yue Q."/>
            <person name="Loksztejn A."/>
            <person name="Yokoyama K."/>
            <person name="Felix E.A."/>
            <person name="Liu X."/>
            <person name="Zhang N."/>
            <person name="An Z."/>
            <person name="Bills G.F."/>
        </authorList>
    </citation>
    <scope>FUNCTION</scope>
    <scope>BIOTECHNOLOGY</scope>
</reference>
<reference key="6">
    <citation type="journal article" date="2018" name="Appl. Environ. Microbiol.">
        <title>Cryptic production of trans-3-hydroxyproline in echinocandin B biosynthesis.</title>
        <authorList>
            <person name="Mattay J."/>
            <person name="Houwaart S."/>
            <person name="Huettel W."/>
        </authorList>
    </citation>
    <scope>FUNCTION</scope>
</reference>
<reference key="7">
    <citation type="journal article" date="2017" name="Z. Naturforsch. C">
        <title>Structural diversity in echinocandin biosynthesis: the impact of oxidation steps and approaches toward an evolutionary explanation.</title>
        <authorList>
            <person name="Huettel W."/>
        </authorList>
    </citation>
    <scope>REVIEW</scope>
</reference>
<keyword id="KW-0349">Heme</keyword>
<keyword id="KW-0408">Iron</keyword>
<keyword id="KW-0479">Metal-binding</keyword>
<keyword id="KW-0503">Monooxygenase</keyword>
<keyword id="KW-0560">Oxidoreductase</keyword>
<keyword id="KW-1185">Reference proteome</keyword>
<keyword id="KW-0732">Signal</keyword>
<proteinExistence type="evidence at protein level"/>
<sequence>MIAALFTTNLQLGAVGVFIFALLAFAFNKLTTWEYSIPKEVQWVDRRTQPFSYLRAKARALARSKENTLEAYFRFNKLGKAAALAVPFGRPLLLLPQTFVRWIVDQPESIISLDPIHDDFHVFVGGDLTGDHTVQELLRRELTLNLDKLISVINDEIVCALDDVLGNSPEWKSTSLADDLKTIVARTSNRVFVGKDLCRNKHYISTVKGLALVIMPETVLQDLIPQFLKGPLSRITKAFNNIYGMKKFSSLLLGVVRQRYIDVKDVLEGSGDKTRLPDDLLTWMVQKSIRKGESSANIDKLLVARIAMANLAAIETTTAAMTRSVLDLVTQGSEGGFLKAVQEETLAVVEGCNYEPSKKDVLKLVLTENAIKEALRLQVAFPGLMRQVVAPNGVTLENGLHVPCGTRLGVSAAGIHVDESIYEDPTTYNPGRFLVRDLDPRGDPSPMWKGNENYLAFSLGRRSCPGRWYVTDQLKLTLAHIFSKYEIRFEKAAETASALRKILPGAPQDRVMIRRRSVGKR</sequence>
<accession>S3D775</accession>
<comment type="function">
    <text evidence="3 4 5 6 7 10">Cytochrome P450 monooxygenase; part of the gene cluster that mediates the biosynthesis of pneumocandins, lipohexapeptides of the echinocandin family that prevent fungal cell wall formation by non-competitive inhibition of beta-1,3-glucan synthase (PubMed:27705900). The 10,12-dimethylmyristoyl side chain is synthesized by the reducing polyketide synthase gloL/GLPKS4 (PubMed:27494047). The thioesterase gloN/GLHYD exclusively interacts with gloL/GLPKS4 to maintain turnover of the polyketide side chain (PubMed:27494047). The 10R,12S-dimethylmyristic acid is then transferred to the first thiolation domain of the nonribosomal peptide synthetase gloA/GLNRPS4 by the acyl-AMP ligase gloD/GLligase, followed by its acylation to L-ornithine to trigger elongation of the cyclic hexapeptide (PubMed:27494047). L-ornithine, 4R-hydroxyl-L-proline (generated from L-proline by the dioxygenase gloF/GLOXY2), 3S-hydroxyl-L-homotyrosine (generated by gloG/GLHtyB, gloH/GLHtyA, gloI/GLHtyC, gloJ/GLHtyD and hydroxylated at C-3 by the dioxygenase gloM/GLOXY1), 3R-hydroxyl-L-glutamine (generated from L-glutamine probably by the dioxygenase gloE/GLOXY3) and 3S-hydroxyl-L-proline (generated from L-proline by the dioxygenase gloF/GLOXY2 to yield pneumocandin B0), or 3S-hydroxyl-4S-methyl-L-proline (generated from L-leucine by the dioxygenase gloC/GLOXY4 to yield pneumocandin A0) are sequentially added to the growing chain (PubMed:25270390, PubMed:25527531, PubMed:25879325). The last C domain of gloA/GLNRPS4 is proposed to be responsible for cyclization by condensation to form the peptide bond between L-ornithine and 3S-hydroxyl-4S-methyl-L-proline (for pneumocandin A0) or 3S-hydroxyl-L-proline (for pneumocandin B0). Finally, the subsequent C-4 hydroxylation of 3S-hydroxyl-L-homotyrosine and L-ornithine dihydroxylation at C-4 and C-5 are performed by the cytochrome P450 monooxygenases gloP/GLP450-1 and gloO/GLP450-2, respectively (PubMed:25879325).</text>
</comment>
<comment type="cofactor">
    <cofactor evidence="1">
        <name>heme</name>
        <dbReference type="ChEBI" id="CHEBI:30413"/>
    </cofactor>
</comment>
<comment type="pathway">
    <text evidence="5">Mycotoxin biosynthesis.</text>
</comment>
<comment type="disruption phenotype">
    <text evidence="5">Leads to the production of pneumocandin analogs with non-hydroxylated ornithine (PubMed:25879325).</text>
</comment>
<comment type="biotechnology">
    <text evidence="4 5 6">Pneumocandin B0 is the starting molecule for the first semisynthetic echinocandin antifungal drug, caspofungin acetate (PubMed:25527531). Pneumocandin B0 is a minor fermentation product, and its industrial production was achieved by a combination of extensive mutation and medium optimization (PubMed:25527531). Inactivation of three of gloP/GLP450-1, gloO/GLP450-2, and gloM/GLOXY1 generates 13 different pneumocandin analogs that lack one, two, three, or four hydroxyl groups on 4R,5R-dihydroxy-ornithine and 3S,4S-dihydroxy-homotyrosine of the parent hexapeptide (PubMed:25879325). All of these cyclic lipopeptides show potent antifungal activities, and two new metabolites pneumocandins F and G are more potent in vitro against Candida species and Aspergillus fumigatus than the principal fermentation products, pneumocandins A0 and B0 (PubMed:25879325). Moreover, feeding alternative side chain precursors yields acrophiarin and 4 additional pneumocandin congeners with straight C14, C15, and C16 side chains. One of those compounds, pneumocandin I, has elevated antifungal activity and similar hemolytic activity compared to pneumocandin B0, the starting molecule for caspofungin, demonstrating the potential for using gloD/GLligase for future engineering of new echinocandin analogs (PubMed:27494047).</text>
</comment>
<comment type="similarity">
    <text evidence="11">Belongs to the cytochrome P450 family.</text>
</comment>